<feature type="transit peptide" description="Mitochondrion" evidence="1">
    <location>
        <begin position="1"/>
        <end position="28"/>
    </location>
</feature>
<feature type="chain" id="PRO_0000010755" description="Aminomethyltransferase, mitochondrial">
    <location>
        <begin position="29"/>
        <end position="403"/>
    </location>
</feature>
<feature type="binding site" evidence="4">
    <location>
        <position position="232"/>
    </location>
    <ligand>
        <name>substrate</name>
    </ligand>
</feature>
<feature type="binding site" evidence="4">
    <location>
        <position position="261"/>
    </location>
    <ligand>
        <name>substrate</name>
    </ligand>
</feature>
<feature type="binding site" evidence="4">
    <location>
        <position position="399"/>
    </location>
    <ligand>
        <name>substrate</name>
    </ligand>
</feature>
<feature type="splice variant" id="VSP_042557" description="In isoform 2." evidence="10">
    <location>
        <begin position="30"/>
        <end position="85"/>
    </location>
</feature>
<feature type="splice variant" id="VSP_043288" description="In isoform 3." evidence="10">
    <location>
        <begin position="113"/>
        <end position="156"/>
    </location>
</feature>
<feature type="splice variant" id="VSP_045418" description="In isoform 4." evidence="11">
    <original>VRRKQQMAVVSKMPFVPTNYYTLK</original>
    <variation>LPSGPCF</variation>
    <location>
        <begin position="380"/>
        <end position="403"/>
    </location>
</feature>
<feature type="sequence variant" id="VAR_007951" description="In GCE2; dbSNP:rs121964983." evidence="8">
    <original>H</original>
    <variation>R</variation>
    <location>
        <position position="42"/>
    </location>
</feature>
<feature type="sequence variant" id="VAR_007952" description="In GCE2; dbSNP:rs121964982." evidence="7">
    <original>G</original>
    <variation>R</variation>
    <location>
        <position position="47"/>
    </location>
</feature>
<feature type="sequence variant" id="VAR_078794" description="In GCE2; dbSNP:rs1126422." evidence="6">
    <original>R</original>
    <variation>W</variation>
    <location>
        <position position="94"/>
    </location>
</feature>
<feature type="sequence variant" id="VAR_016847" description="In GCE2; loss of aminomethyltransferase activity; dbSNP:rs386833682." evidence="3 4">
    <original>N</original>
    <variation>I</variation>
    <location>
        <position position="145"/>
    </location>
</feature>
<feature type="sequence variant" id="VAR_016848" description="In GCE2; dbSNP:rs116192290." evidence="2">
    <original>E</original>
    <variation>K</variation>
    <location>
        <position position="211"/>
    </location>
</feature>
<feature type="sequence variant" id="VAR_078795" description="In GCE2; dbSNP:rs781466698." evidence="6">
    <original>R</original>
    <variation>C</variation>
    <location>
        <position position="222"/>
    </location>
</feature>
<feature type="sequence variant" id="VAR_074107" description="In GCE2; dbSNP:rs779483959." evidence="5">
    <original>R</original>
    <variation>C</variation>
    <location>
        <position position="265"/>
    </location>
</feature>
<feature type="sequence variant" id="VAR_007953" description="In GCE2; decreased aminomethyltransferase activity; dbSNP:rs121964981." evidence="4 7">
    <original>G</original>
    <variation>D</variation>
    <location>
        <position position="269"/>
    </location>
</feature>
<feature type="sequence variant" id="VAR_007954" description="In GCE2; dbSNP:rs121964984." evidence="9">
    <original>D</original>
    <variation>H</variation>
    <location>
        <position position="276"/>
    </location>
</feature>
<feature type="sequence variant" id="VAR_078796" description="In GCE2; dbSNP:rs1056820947." evidence="6">
    <original>R</original>
    <variation>C</variation>
    <location>
        <position position="296"/>
    </location>
</feature>
<feature type="sequence variant" id="VAR_007955" description="In GCE2; loss of aminomethyltransferase activity; dbSNP:rs121964985." evidence="2 3 4 7">
    <original>R</original>
    <variation>H</variation>
    <location>
        <position position="320"/>
    </location>
</feature>
<feature type="mutagenesis site" description="Loss of aminomethyltransferase activity." evidence="4">
    <original>D</original>
    <variation>A</variation>
    <variation>N</variation>
    <location>
        <position position="129"/>
    </location>
</feature>
<feature type="sequence conflict" description="In Ref. 2; BAA03512." evidence="13" ref="2">
    <original>V</original>
    <variation>C</variation>
    <location>
        <position position="95"/>
    </location>
</feature>
<feature type="helix" evidence="16">
    <location>
        <begin position="39"/>
        <end position="44"/>
    </location>
</feature>
<feature type="strand" evidence="16">
    <location>
        <begin position="48"/>
        <end position="52"/>
    </location>
</feature>
<feature type="strand" evidence="16">
    <location>
        <begin position="55"/>
        <end position="60"/>
    </location>
</feature>
<feature type="helix" evidence="16">
    <location>
        <begin position="65"/>
        <end position="74"/>
    </location>
</feature>
<feature type="strand" evidence="16">
    <location>
        <begin position="75"/>
        <end position="80"/>
    </location>
</feature>
<feature type="strand" evidence="16">
    <location>
        <begin position="84"/>
        <end position="91"/>
    </location>
</feature>
<feature type="helix" evidence="16">
    <location>
        <begin position="94"/>
        <end position="101"/>
    </location>
</feature>
<feature type="strand" evidence="16">
    <location>
        <begin position="102"/>
        <end position="104"/>
    </location>
</feature>
<feature type="strand" evidence="16">
    <location>
        <begin position="113"/>
        <end position="120"/>
    </location>
</feature>
<feature type="strand" evidence="16">
    <location>
        <begin position="126"/>
        <end position="134"/>
    </location>
</feature>
<feature type="strand" evidence="16">
    <location>
        <begin position="138"/>
        <end position="144"/>
    </location>
</feature>
<feature type="helix" evidence="16">
    <location>
        <begin position="146"/>
        <end position="148"/>
    </location>
</feature>
<feature type="helix" evidence="16">
    <location>
        <begin position="149"/>
        <end position="165"/>
    </location>
</feature>
<feature type="strand" evidence="16">
    <location>
        <begin position="171"/>
        <end position="174"/>
    </location>
</feature>
<feature type="strand" evidence="16">
    <location>
        <begin position="178"/>
        <end position="184"/>
    </location>
</feature>
<feature type="helix" evidence="16">
    <location>
        <begin position="187"/>
        <end position="192"/>
    </location>
</feature>
<feature type="helix" evidence="16">
    <location>
        <begin position="199"/>
        <end position="201"/>
    </location>
</feature>
<feature type="strand" evidence="16">
    <location>
        <begin position="206"/>
        <end position="212"/>
    </location>
</feature>
<feature type="strand" evidence="16">
    <location>
        <begin position="215"/>
        <end position="222"/>
    </location>
</feature>
<feature type="strand" evidence="16">
    <location>
        <begin position="225"/>
        <end position="235"/>
    </location>
</feature>
<feature type="helix" evidence="16">
    <location>
        <begin position="237"/>
        <end position="248"/>
    </location>
</feature>
<feature type="strand" evidence="16">
    <location>
        <begin position="253"/>
        <end position="255"/>
    </location>
</feature>
<feature type="helix" evidence="16">
    <location>
        <begin position="258"/>
        <end position="267"/>
    </location>
</feature>
<feature type="turn" evidence="16">
    <location>
        <begin position="273"/>
        <end position="275"/>
    </location>
</feature>
<feature type="turn" evidence="16">
    <location>
        <begin position="283"/>
        <end position="287"/>
    </location>
</feature>
<feature type="helix" evidence="16">
    <location>
        <begin position="289"/>
        <end position="291"/>
    </location>
</feature>
<feature type="helix" evidence="16">
    <location>
        <begin position="294"/>
        <end position="299"/>
    </location>
</feature>
<feature type="helix" evidence="16">
    <location>
        <begin position="305"/>
        <end position="312"/>
    </location>
</feature>
<feature type="strand" evidence="16">
    <location>
        <begin position="319"/>
        <end position="328"/>
    </location>
</feature>
<feature type="strand" evidence="16">
    <location>
        <begin position="335"/>
        <end position="337"/>
    </location>
</feature>
<feature type="strand" evidence="16">
    <location>
        <begin position="343"/>
        <end position="353"/>
    </location>
</feature>
<feature type="turn" evidence="16">
    <location>
        <begin position="354"/>
        <end position="357"/>
    </location>
</feature>
<feature type="strand" evidence="16">
    <location>
        <begin position="358"/>
        <end position="365"/>
    </location>
</feature>
<feature type="helix" evidence="16">
    <location>
        <begin position="367"/>
        <end position="369"/>
    </location>
</feature>
<feature type="strand" evidence="16">
    <location>
        <begin position="375"/>
        <end position="380"/>
    </location>
</feature>
<feature type="strand" evidence="16">
    <location>
        <begin position="383"/>
        <end position="390"/>
    </location>
</feature>
<evidence type="ECO:0000250" key="1">
    <source>
        <dbReference type="UniProtKB" id="P25285"/>
    </source>
</evidence>
<evidence type="ECO:0000269" key="2">
    <source>
    </source>
</evidence>
<evidence type="ECO:0000269" key="3">
    <source>
    </source>
</evidence>
<evidence type="ECO:0000269" key="4">
    <source>
    </source>
</evidence>
<evidence type="ECO:0000269" key="5">
    <source>
    </source>
</evidence>
<evidence type="ECO:0000269" key="6">
    <source>
    </source>
</evidence>
<evidence type="ECO:0000269" key="7">
    <source>
    </source>
</evidence>
<evidence type="ECO:0000269" key="8">
    <source>
    </source>
</evidence>
<evidence type="ECO:0000269" key="9">
    <source>
    </source>
</evidence>
<evidence type="ECO:0000303" key="10">
    <source>
    </source>
</evidence>
<evidence type="ECO:0000303" key="11">
    <source>
    </source>
</evidence>
<evidence type="ECO:0000303" key="12">
    <source>
    </source>
</evidence>
<evidence type="ECO:0000305" key="13"/>
<evidence type="ECO:0000305" key="14">
    <source>
    </source>
</evidence>
<evidence type="ECO:0000312" key="15">
    <source>
        <dbReference type="HGNC" id="HGNC:473"/>
    </source>
</evidence>
<evidence type="ECO:0007829" key="16">
    <source>
        <dbReference type="PDB" id="1WSR"/>
    </source>
</evidence>
<organism>
    <name type="scientific">Homo sapiens</name>
    <name type="common">Human</name>
    <dbReference type="NCBI Taxonomy" id="9606"/>
    <lineage>
        <taxon>Eukaryota</taxon>
        <taxon>Metazoa</taxon>
        <taxon>Chordata</taxon>
        <taxon>Craniata</taxon>
        <taxon>Vertebrata</taxon>
        <taxon>Euteleostomi</taxon>
        <taxon>Mammalia</taxon>
        <taxon>Eutheria</taxon>
        <taxon>Euarchontoglires</taxon>
        <taxon>Primates</taxon>
        <taxon>Haplorrhini</taxon>
        <taxon>Catarrhini</taxon>
        <taxon>Hominidae</taxon>
        <taxon>Homo</taxon>
    </lineage>
</organism>
<keyword id="KW-0002">3D-structure</keyword>
<keyword id="KW-0025">Alternative splicing</keyword>
<keyword id="KW-0032">Aminotransferase</keyword>
<keyword id="KW-0225">Disease variant</keyword>
<keyword id="KW-0496">Mitochondrion</keyword>
<keyword id="KW-1267">Proteomics identification</keyword>
<keyword id="KW-1185">Reference proteome</keyword>
<keyword id="KW-0808">Transferase</keyword>
<keyword id="KW-0809">Transit peptide</keyword>
<proteinExistence type="evidence at protein level"/>
<comment type="function">
    <text evidence="4">The glycine cleavage system catalyzes the degradation of glycine.</text>
</comment>
<comment type="catalytic activity">
    <reaction evidence="4">
        <text>N(6)-[(R)-S(8)-aminomethyldihydrolipoyl]-L-lysyl-[protein] + (6S)-5,6,7,8-tetrahydrofolate = N(6)-[(R)-dihydrolipoyl]-L-lysyl-[protein] + (6R)-5,10-methylene-5,6,7,8-tetrahydrofolate + NH4(+)</text>
        <dbReference type="Rhea" id="RHEA:16945"/>
        <dbReference type="Rhea" id="RHEA-COMP:10475"/>
        <dbReference type="Rhea" id="RHEA-COMP:10492"/>
        <dbReference type="ChEBI" id="CHEBI:15636"/>
        <dbReference type="ChEBI" id="CHEBI:28938"/>
        <dbReference type="ChEBI" id="CHEBI:57453"/>
        <dbReference type="ChEBI" id="CHEBI:83100"/>
        <dbReference type="ChEBI" id="CHEBI:83143"/>
        <dbReference type="EC" id="2.1.2.10"/>
    </reaction>
</comment>
<comment type="subunit">
    <text evidence="14">The glycine cleavage system is composed of four proteins: P, T, L and H.</text>
</comment>
<comment type="interaction">
    <interactant intactId="EBI-14394829">
        <id>P48728-4</id>
    </interactant>
    <interactant intactId="EBI-372861">
        <id>P50479</id>
        <label>PDLIM4</label>
    </interactant>
    <organismsDiffer>false</organismsDiffer>
    <experiments>5</experiments>
</comment>
<comment type="interaction">
    <interactant intactId="EBI-14394829">
        <id>P48728-4</id>
    </interactant>
    <interactant intactId="EBI-2107455">
        <id>Q08AM6</id>
        <label>VAC14</label>
    </interactant>
    <organismsDiffer>false</organismsDiffer>
    <experiments>3</experiments>
</comment>
<comment type="subcellular location">
    <subcellularLocation>
        <location evidence="14">Mitochondrion</location>
    </subcellularLocation>
</comment>
<comment type="alternative products">
    <event type="alternative splicing"/>
    <isoform>
        <id>P48728-1</id>
        <name>1</name>
        <sequence type="displayed"/>
    </isoform>
    <isoform>
        <id>P48728-2</id>
        <name>2</name>
        <sequence type="described" ref="VSP_042557"/>
    </isoform>
    <isoform>
        <id>P48728-3</id>
        <name>3</name>
        <sequence type="described" ref="VSP_043288"/>
    </isoform>
    <isoform>
        <id>P48728-4</id>
        <name>4</name>
        <sequence type="described" ref="VSP_045418"/>
    </isoform>
</comment>
<comment type="disease" evidence="2 3 4 5 6 7 8 9">
    <disease id="DI-06697">
        <name>Glycine encephalopathy 2</name>
        <acronym>GCE2</acronym>
        <description>A form of glycine encephalopathy, a metabolic disorder characterized by a high concentration of glycine in the body fluids. Affected individuals typically have severe neurological symptoms, including seizure, lethargy, and muscular hypotonia soon after birth. Most of them die within the neonatal period. Atypical cases have later disease onset and less severely affected psychomotor development.</description>
        <dbReference type="MIM" id="620398"/>
    </disease>
    <text>The disease is caused by variants affecting the gene represented in this entry.</text>
</comment>
<comment type="similarity">
    <text evidence="13">Belongs to the GcvT family.</text>
</comment>
<accession>P48728</accession>
<accession>A8K3I5</accession>
<accession>B4DE61</accession>
<accession>B4DJQ0</accession>
<accession>E9PBG1</accession>
<accession>Q96IG6</accession>
<name>GCST_HUMAN</name>
<gene>
    <name evidence="15" type="primary">AMT</name>
    <name evidence="15" type="synonym">GCST</name>
</gene>
<protein>
    <recommendedName>
        <fullName evidence="13">Aminomethyltransferase, mitochondrial</fullName>
        <ecNumber evidence="4">2.1.2.10</ecNumber>
    </recommendedName>
    <alternativeName>
        <fullName evidence="12">Glycine cleavage system T protein</fullName>
        <shortName>GCVT</shortName>
    </alternativeName>
</protein>
<reference key="1">
    <citation type="journal article" date="1993" name="Biochem. Biophys. Res. Commun.">
        <title>Isolation and sequence determination of cDNA encoding human T-protein of the glycine cleavage system.</title>
        <authorList>
            <person name="Hayasaka K."/>
            <person name="Nanao K."/>
            <person name="Takada G."/>
            <person name="Okamura-Ikeda K."/>
            <person name="Motokawa Y."/>
        </authorList>
    </citation>
    <scope>NUCLEOTIDE SEQUENCE [MRNA] (ISOFORM 1)</scope>
</reference>
<reference key="2">
    <citation type="journal article" date="1994" name="Genomics">
        <title>Structure and chromosomal localization of the aminomethyltransferase gene (AMT).</title>
        <authorList>
            <person name="Nanao K."/>
            <person name="Takada G."/>
            <person name="Takahashi E."/>
            <person name="Seki N."/>
            <person name="Komatsu Y."/>
            <person name="Okamura-Ikeda K."/>
            <person name="Motokawa Y."/>
            <person name="Hayasaka K."/>
        </authorList>
    </citation>
    <scope>NUCLEOTIDE SEQUENCE [GENOMIC DNA]</scope>
</reference>
<reference key="3">
    <citation type="journal article" date="2004" name="Nat. Genet.">
        <title>Complete sequencing and characterization of 21,243 full-length human cDNAs.</title>
        <authorList>
            <person name="Ota T."/>
            <person name="Suzuki Y."/>
            <person name="Nishikawa T."/>
            <person name="Otsuki T."/>
            <person name="Sugiyama T."/>
            <person name="Irie R."/>
            <person name="Wakamatsu A."/>
            <person name="Hayashi K."/>
            <person name="Sato H."/>
            <person name="Nagai K."/>
            <person name="Kimura K."/>
            <person name="Makita H."/>
            <person name="Sekine M."/>
            <person name="Obayashi M."/>
            <person name="Nishi T."/>
            <person name="Shibahara T."/>
            <person name="Tanaka T."/>
            <person name="Ishii S."/>
            <person name="Yamamoto J."/>
            <person name="Saito K."/>
            <person name="Kawai Y."/>
            <person name="Isono Y."/>
            <person name="Nakamura Y."/>
            <person name="Nagahari K."/>
            <person name="Murakami K."/>
            <person name="Yasuda T."/>
            <person name="Iwayanagi T."/>
            <person name="Wagatsuma M."/>
            <person name="Shiratori A."/>
            <person name="Sudo H."/>
            <person name="Hosoiri T."/>
            <person name="Kaku Y."/>
            <person name="Kodaira H."/>
            <person name="Kondo H."/>
            <person name="Sugawara M."/>
            <person name="Takahashi M."/>
            <person name="Kanda K."/>
            <person name="Yokoi T."/>
            <person name="Furuya T."/>
            <person name="Kikkawa E."/>
            <person name="Omura Y."/>
            <person name="Abe K."/>
            <person name="Kamihara K."/>
            <person name="Katsuta N."/>
            <person name="Sato K."/>
            <person name="Tanikawa M."/>
            <person name="Yamazaki M."/>
            <person name="Ninomiya K."/>
            <person name="Ishibashi T."/>
            <person name="Yamashita H."/>
            <person name="Murakawa K."/>
            <person name="Fujimori K."/>
            <person name="Tanai H."/>
            <person name="Kimata M."/>
            <person name="Watanabe M."/>
            <person name="Hiraoka S."/>
            <person name="Chiba Y."/>
            <person name="Ishida S."/>
            <person name="Ono Y."/>
            <person name="Takiguchi S."/>
            <person name="Watanabe S."/>
            <person name="Yosida M."/>
            <person name="Hotuta T."/>
            <person name="Kusano J."/>
            <person name="Kanehori K."/>
            <person name="Takahashi-Fujii A."/>
            <person name="Hara H."/>
            <person name="Tanase T.-O."/>
            <person name="Nomura Y."/>
            <person name="Togiya S."/>
            <person name="Komai F."/>
            <person name="Hara R."/>
            <person name="Takeuchi K."/>
            <person name="Arita M."/>
            <person name="Imose N."/>
            <person name="Musashino K."/>
            <person name="Yuuki H."/>
            <person name="Oshima A."/>
            <person name="Sasaki N."/>
            <person name="Aotsuka S."/>
            <person name="Yoshikawa Y."/>
            <person name="Matsunawa H."/>
            <person name="Ichihara T."/>
            <person name="Shiohata N."/>
            <person name="Sano S."/>
            <person name="Moriya S."/>
            <person name="Momiyama H."/>
            <person name="Satoh N."/>
            <person name="Takami S."/>
            <person name="Terashima Y."/>
            <person name="Suzuki O."/>
            <person name="Nakagawa S."/>
            <person name="Senoh A."/>
            <person name="Mizoguchi H."/>
            <person name="Goto Y."/>
            <person name="Shimizu F."/>
            <person name="Wakebe H."/>
            <person name="Hishigaki H."/>
            <person name="Watanabe T."/>
            <person name="Sugiyama A."/>
            <person name="Takemoto M."/>
            <person name="Kawakami B."/>
            <person name="Yamazaki M."/>
            <person name="Watanabe K."/>
            <person name="Kumagai A."/>
            <person name="Itakura S."/>
            <person name="Fukuzumi Y."/>
            <person name="Fujimori Y."/>
            <person name="Komiyama M."/>
            <person name="Tashiro H."/>
            <person name="Tanigami A."/>
            <person name="Fujiwara T."/>
            <person name="Ono T."/>
            <person name="Yamada K."/>
            <person name="Fujii Y."/>
            <person name="Ozaki K."/>
            <person name="Hirao M."/>
            <person name="Ohmori Y."/>
            <person name="Kawabata A."/>
            <person name="Hikiji T."/>
            <person name="Kobatake N."/>
            <person name="Inagaki H."/>
            <person name="Ikema Y."/>
            <person name="Okamoto S."/>
            <person name="Okitani R."/>
            <person name="Kawakami T."/>
            <person name="Noguchi S."/>
            <person name="Itoh T."/>
            <person name="Shigeta K."/>
            <person name="Senba T."/>
            <person name="Matsumura K."/>
            <person name="Nakajima Y."/>
            <person name="Mizuno T."/>
            <person name="Morinaga M."/>
            <person name="Sasaki M."/>
            <person name="Togashi T."/>
            <person name="Oyama M."/>
            <person name="Hata H."/>
            <person name="Watanabe M."/>
            <person name="Komatsu T."/>
            <person name="Mizushima-Sugano J."/>
            <person name="Satoh T."/>
            <person name="Shirai Y."/>
            <person name="Takahashi Y."/>
            <person name="Nakagawa K."/>
            <person name="Okumura K."/>
            <person name="Nagase T."/>
            <person name="Nomura N."/>
            <person name="Kikuchi H."/>
            <person name="Masuho Y."/>
            <person name="Yamashita R."/>
            <person name="Nakai K."/>
            <person name="Yada T."/>
            <person name="Nakamura Y."/>
            <person name="Ohara O."/>
            <person name="Isogai T."/>
            <person name="Sugano S."/>
        </authorList>
    </citation>
    <scope>NUCLEOTIDE SEQUENCE [LARGE SCALE MRNA] (ISOFORMS 1; 2 AND 3)</scope>
    <source>
        <tissue>Cerebellum</tissue>
        <tissue>Heart</tissue>
        <tissue>Thalamus</tissue>
    </source>
</reference>
<reference key="4">
    <citation type="journal article" date="2006" name="Nature">
        <title>The DNA sequence, annotation and analysis of human chromosome 3.</title>
        <authorList>
            <person name="Muzny D.M."/>
            <person name="Scherer S.E."/>
            <person name="Kaul R."/>
            <person name="Wang J."/>
            <person name="Yu J."/>
            <person name="Sudbrak R."/>
            <person name="Buhay C.J."/>
            <person name="Chen R."/>
            <person name="Cree A."/>
            <person name="Ding Y."/>
            <person name="Dugan-Rocha S."/>
            <person name="Gill R."/>
            <person name="Gunaratne P."/>
            <person name="Harris R.A."/>
            <person name="Hawes A.C."/>
            <person name="Hernandez J."/>
            <person name="Hodgson A.V."/>
            <person name="Hume J."/>
            <person name="Jackson A."/>
            <person name="Khan Z.M."/>
            <person name="Kovar-Smith C."/>
            <person name="Lewis L.R."/>
            <person name="Lozado R.J."/>
            <person name="Metzker M.L."/>
            <person name="Milosavljevic A."/>
            <person name="Miner G.R."/>
            <person name="Morgan M.B."/>
            <person name="Nazareth L.V."/>
            <person name="Scott G."/>
            <person name="Sodergren E."/>
            <person name="Song X.-Z."/>
            <person name="Steffen D."/>
            <person name="Wei S."/>
            <person name="Wheeler D.A."/>
            <person name="Wright M.W."/>
            <person name="Worley K.C."/>
            <person name="Yuan Y."/>
            <person name="Zhang Z."/>
            <person name="Adams C.Q."/>
            <person name="Ansari-Lari M.A."/>
            <person name="Ayele M."/>
            <person name="Brown M.J."/>
            <person name="Chen G."/>
            <person name="Chen Z."/>
            <person name="Clendenning J."/>
            <person name="Clerc-Blankenburg K.P."/>
            <person name="Chen R."/>
            <person name="Chen Z."/>
            <person name="Davis C."/>
            <person name="Delgado O."/>
            <person name="Dinh H.H."/>
            <person name="Dong W."/>
            <person name="Draper H."/>
            <person name="Ernst S."/>
            <person name="Fu G."/>
            <person name="Gonzalez-Garay M.L."/>
            <person name="Garcia D.K."/>
            <person name="Gillett W."/>
            <person name="Gu J."/>
            <person name="Hao B."/>
            <person name="Haugen E."/>
            <person name="Havlak P."/>
            <person name="He X."/>
            <person name="Hennig S."/>
            <person name="Hu S."/>
            <person name="Huang W."/>
            <person name="Jackson L.R."/>
            <person name="Jacob L.S."/>
            <person name="Kelly S.H."/>
            <person name="Kube M."/>
            <person name="Levy R."/>
            <person name="Li Z."/>
            <person name="Liu B."/>
            <person name="Liu J."/>
            <person name="Liu W."/>
            <person name="Lu J."/>
            <person name="Maheshwari M."/>
            <person name="Nguyen B.-V."/>
            <person name="Okwuonu G.O."/>
            <person name="Palmeiri A."/>
            <person name="Pasternak S."/>
            <person name="Perez L.M."/>
            <person name="Phelps K.A."/>
            <person name="Plopper F.J."/>
            <person name="Qiang B."/>
            <person name="Raymond C."/>
            <person name="Rodriguez R."/>
            <person name="Saenphimmachak C."/>
            <person name="Santibanez J."/>
            <person name="Shen H."/>
            <person name="Shen Y."/>
            <person name="Subramanian S."/>
            <person name="Tabor P.E."/>
            <person name="Verduzco D."/>
            <person name="Waldron L."/>
            <person name="Wang J."/>
            <person name="Wang J."/>
            <person name="Wang Q."/>
            <person name="Williams G.A."/>
            <person name="Wong G.K.-S."/>
            <person name="Yao Z."/>
            <person name="Zhang J."/>
            <person name="Zhang X."/>
            <person name="Zhao G."/>
            <person name="Zhou J."/>
            <person name="Zhou Y."/>
            <person name="Nelson D."/>
            <person name="Lehrach H."/>
            <person name="Reinhardt R."/>
            <person name="Naylor S.L."/>
            <person name="Yang H."/>
            <person name="Olson M."/>
            <person name="Weinstock G."/>
            <person name="Gibbs R.A."/>
        </authorList>
    </citation>
    <scope>NUCLEOTIDE SEQUENCE [LARGE SCALE GENOMIC DNA]</scope>
</reference>
<reference key="5">
    <citation type="submission" date="2005-07" db="EMBL/GenBank/DDBJ databases">
        <authorList>
            <person name="Mural R.J."/>
            <person name="Istrail S."/>
            <person name="Sutton G.G."/>
            <person name="Florea L."/>
            <person name="Halpern A.L."/>
            <person name="Mobarry C.M."/>
            <person name="Lippert R."/>
            <person name="Walenz B."/>
            <person name="Shatkay H."/>
            <person name="Dew I."/>
            <person name="Miller J.R."/>
            <person name="Flanigan M.J."/>
            <person name="Edwards N.J."/>
            <person name="Bolanos R."/>
            <person name="Fasulo D."/>
            <person name="Halldorsson B.V."/>
            <person name="Hannenhalli S."/>
            <person name="Turner R."/>
            <person name="Yooseph S."/>
            <person name="Lu F."/>
            <person name="Nusskern D.R."/>
            <person name="Shue B.C."/>
            <person name="Zheng X.H."/>
            <person name="Zhong F."/>
            <person name="Delcher A.L."/>
            <person name="Huson D.H."/>
            <person name="Kravitz S.A."/>
            <person name="Mouchard L."/>
            <person name="Reinert K."/>
            <person name="Remington K.A."/>
            <person name="Clark A.G."/>
            <person name="Waterman M.S."/>
            <person name="Eichler E.E."/>
            <person name="Adams M.D."/>
            <person name="Hunkapiller M.W."/>
            <person name="Myers E.W."/>
            <person name="Venter J.C."/>
        </authorList>
    </citation>
    <scope>NUCLEOTIDE SEQUENCE [LARGE SCALE GENOMIC DNA]</scope>
</reference>
<reference key="6">
    <citation type="journal article" date="2004" name="Genome Res.">
        <title>The status, quality, and expansion of the NIH full-length cDNA project: the Mammalian Gene Collection (MGC).</title>
        <authorList>
            <consortium name="The MGC Project Team"/>
        </authorList>
    </citation>
    <scope>NUCLEOTIDE SEQUENCE [LARGE SCALE MRNA] OF 4-386 (ISOFORM 4)</scope>
    <source>
        <tissue>Colon</tissue>
    </source>
</reference>
<reference key="7">
    <citation type="journal article" date="2017" name="Hum. Mutat.">
        <title>Nonketotic Hyperglycinemia: functional assessment of missense variants in GLDC to understand phenotypes of the disease.</title>
        <authorList>
            <person name="Bravo-Alonso I."/>
            <person name="Navarrete R."/>
            <person name="Arribas-Carreira L."/>
            <person name="Perona A."/>
            <person name="Abia D."/>
            <person name="Couce M.L."/>
            <person name="Garcia-Cazorla A."/>
            <person name="Morais A."/>
            <person name="Domingo R."/>
            <person name="Ramos M.A."/>
            <person name="Swanson M.A."/>
            <person name="Van Hove J.L."/>
            <person name="Ugarte M."/>
            <person name="Perez B."/>
            <person name="Perez-Cerda C."/>
            <person name="Rodriguez-Pombo P."/>
        </authorList>
    </citation>
    <scope>INVOLVEMENT IN GCE2</scope>
    <scope>VARIANTS GCE2 TRP-94; CYS-222 AND CYS-296</scope>
</reference>
<reference key="8">
    <citation type="journal article" date="2005" name="J. Mol. Biol.">
        <title>Crystal structure of human T-protein of glycine cleavage system at 2.0 A resolution and its implication for understanding non-ketotic hyperglycinemia.</title>
        <authorList>
            <person name="Okamura-Ikeda K."/>
            <person name="Hosaka H."/>
            <person name="Yoshimura M."/>
            <person name="Yamashita E."/>
            <person name="Toma S."/>
            <person name="Nakagawa A."/>
            <person name="Fujiwara K."/>
            <person name="Motokawa Y."/>
            <person name="Taniguchi H."/>
        </authorList>
    </citation>
    <scope>X-RAY CRYSTALLOGRAPHY (2.0 ANGSTROMS) OF 29-403 ALONE AND IN COMPLEX WITH 5-METHYLTETRAHYDROFOLATE</scope>
    <scope>SUBSTRATE-BINDING SITES</scope>
    <scope>CATALYTIC ACTIVITY</scope>
    <scope>FUNCTION</scope>
    <scope>SUBUNIT</scope>
    <scope>SUBCELLULAR LOCATION</scope>
    <scope>CHARACTERIZATION OF VARIANTS GCE2 ILE-145; ASP-269 AND HIS-320</scope>
    <scope>MUTAGENESIS OF ASP-129</scope>
</reference>
<reference key="9">
    <citation type="journal article" date="1994" name="Hum. Genet.">
        <title>Identification of the mutations in the T-protein gene causing typical and atypical nonketotic hyperglycinemia.</title>
        <authorList>
            <person name="Nanao K."/>
            <person name="Okamura-Ikeda K."/>
            <person name="Motokawa Y."/>
            <person name="Danks D.M."/>
            <person name="Baumgartner E.R."/>
            <person name="Takada G."/>
            <person name="Hayasaka K."/>
        </authorList>
    </citation>
    <scope>VARIANTS GCE2 ARG-47; ASP-269 AND HIS-320</scope>
    <scope>INVOLVEMENT IN GCE2</scope>
</reference>
<reference key="10">
    <citation type="journal article" date="1998" name="Hum. Genet.">
        <title>A missense mutation (His42Arg) in the T-protein gene from a large Israeli-Arab kindred with nonketotic hyperglycinemia.</title>
        <authorList>
            <person name="Kure S."/>
            <person name="Mandel H."/>
            <person name="Rolland M.-O."/>
            <person name="Sakata Y."/>
            <person name="Shinka T."/>
            <person name="Drugan A."/>
            <person name="Boneh A."/>
            <person name="Tada K."/>
            <person name="Matsubara Y."/>
            <person name="Narisawa K."/>
        </authorList>
    </citation>
    <scope>VARIANT GCE2 ARG-42</scope>
</reference>
<reference key="11">
    <citation type="journal article" date="1998" name="J. Hum. Genet.">
        <title>A one-base deletion (183delC) and a missense mutation (D276H) in the T-protein gene from a Japanese family with nonketotic hyperglycinemia.</title>
        <authorList>
            <person name="Kure S."/>
            <person name="Shinka T."/>
            <person name="Sakata Y."/>
            <person name="Osamu N."/>
            <person name="Takayanagi M."/>
            <person name="Tada K."/>
            <person name="Matsubara Y."/>
            <person name="Narisawa K."/>
        </authorList>
    </citation>
    <scope>VARIANT GCE2 HIS-276</scope>
</reference>
<reference key="12">
    <citation type="journal article" date="2000" name="Mol. Genet. Metab.">
        <title>Biochemical and molecular investigations of patients with nonketotic hyperglycinemia.</title>
        <authorList>
            <person name="Toone J.R."/>
            <person name="Applegarth D.A."/>
            <person name="Coulter-Mackie M.B."/>
            <person name="James E.R."/>
        </authorList>
    </citation>
    <scope>VARIANTS GCE2 LYS-211 AND HIS-320</scope>
</reference>
<reference key="13">
    <citation type="journal article" date="2001" name="Mol. Genet. Metab.">
        <title>Recurrent mutations in P- and T-proteins of the glycine cleavage complex and a novel T-protein mutation (N145I): a strategy for the molecular investigation of patients with nonketotic hyperglycinemia (NKH).</title>
        <authorList>
            <person name="Toone J.R."/>
            <person name="Applegarth D.A."/>
            <person name="Coulter-Mackie M.B."/>
            <person name="James E.R."/>
        </authorList>
    </citation>
    <scope>VARIANTS GCE2 ILE-145 AND HIS-320</scope>
</reference>
<reference key="14">
    <citation type="journal article" date="2016" name="Eur. J. Paediatr. Neurol.">
        <title>A novel AMT gene mutation in a newborn with nonketotic hyperglycinemia and early myoclonic encephalopathy.</title>
        <authorList>
            <person name="Belcastro V."/>
            <person name="Barbarini M."/>
            <person name="Barca S."/>
            <person name="Mauro I."/>
        </authorList>
    </citation>
    <scope>VARIANT GCE2 CYS-265</scope>
</reference>
<dbReference type="EC" id="2.1.2.10" evidence="4"/>
<dbReference type="EMBL" id="D13811">
    <property type="protein sequence ID" value="BAA02967.1"/>
    <property type="molecule type" value="mRNA"/>
</dbReference>
<dbReference type="EMBL" id="D14686">
    <property type="protein sequence ID" value="BAA03512.1"/>
    <property type="molecule type" value="Genomic_DNA"/>
</dbReference>
<dbReference type="EMBL" id="AK290600">
    <property type="protein sequence ID" value="BAF83289.1"/>
    <property type="molecule type" value="mRNA"/>
</dbReference>
<dbReference type="EMBL" id="AK293481">
    <property type="protein sequence ID" value="BAG56972.1"/>
    <property type="molecule type" value="mRNA"/>
</dbReference>
<dbReference type="EMBL" id="AK296177">
    <property type="protein sequence ID" value="BAG58912.1"/>
    <property type="molecule type" value="mRNA"/>
</dbReference>
<dbReference type="EMBL" id="AC104452">
    <property type="status" value="NOT_ANNOTATED_CDS"/>
    <property type="molecule type" value="Genomic_DNA"/>
</dbReference>
<dbReference type="EMBL" id="CH471055">
    <property type="protein sequence ID" value="EAW64984.1"/>
    <property type="molecule type" value="Genomic_DNA"/>
</dbReference>
<dbReference type="EMBL" id="BC007546">
    <property type="protein sequence ID" value="AAH07546.2"/>
    <property type="molecule type" value="mRNA"/>
</dbReference>
<dbReference type="CCDS" id="CCDS2797.1">
    <molecule id="P48728-1"/>
</dbReference>
<dbReference type="CCDS" id="CCDS54583.1">
    <molecule id="P48728-2"/>
</dbReference>
<dbReference type="CCDS" id="CCDS54584.1">
    <molecule id="P48728-3"/>
</dbReference>
<dbReference type="CCDS" id="CCDS54585.1">
    <molecule id="P48728-4"/>
</dbReference>
<dbReference type="PIR" id="I54192">
    <property type="entry name" value="I54192"/>
</dbReference>
<dbReference type="RefSeq" id="NP_000472.2">
    <molecule id="P48728-1"/>
    <property type="nucleotide sequence ID" value="NM_000481.3"/>
</dbReference>
<dbReference type="RefSeq" id="NP_001158182.1">
    <molecule id="P48728-3"/>
    <property type="nucleotide sequence ID" value="NM_001164710.2"/>
</dbReference>
<dbReference type="RefSeq" id="NP_001158183.1">
    <molecule id="P48728-2"/>
    <property type="nucleotide sequence ID" value="NM_001164711.2"/>
</dbReference>
<dbReference type="RefSeq" id="NP_001158184.1">
    <molecule id="P48728-4"/>
    <property type="nucleotide sequence ID" value="NM_001164712.2"/>
</dbReference>
<dbReference type="PDB" id="1WSR">
    <property type="method" value="X-ray"/>
    <property type="resolution" value="2.00 A"/>
    <property type="chains" value="A/B=29-403"/>
</dbReference>
<dbReference type="PDB" id="1WSV">
    <property type="method" value="X-ray"/>
    <property type="resolution" value="2.60 A"/>
    <property type="chains" value="A/B=29-403"/>
</dbReference>
<dbReference type="PDBsum" id="1WSR"/>
<dbReference type="PDBsum" id="1WSV"/>
<dbReference type="SMR" id="P48728"/>
<dbReference type="BioGRID" id="106772">
    <property type="interactions" value="15"/>
</dbReference>
<dbReference type="FunCoup" id="P48728">
    <property type="interactions" value="883"/>
</dbReference>
<dbReference type="IntAct" id="P48728">
    <property type="interactions" value="3"/>
</dbReference>
<dbReference type="STRING" id="9606.ENSP00000273588"/>
<dbReference type="DrugBank" id="DB04789">
    <property type="generic name" value="5-methyltetrahydrofolic acid"/>
</dbReference>
<dbReference type="DrugBank" id="DB00145">
    <property type="generic name" value="Glycine"/>
</dbReference>
<dbReference type="DrugBank" id="DB00157">
    <property type="generic name" value="NADH"/>
</dbReference>
<dbReference type="DrugBank" id="DB00116">
    <property type="generic name" value="Tetrahydrofolic acid"/>
</dbReference>
<dbReference type="GlyGen" id="P48728">
    <property type="glycosylation" value="1 site"/>
</dbReference>
<dbReference type="iPTMnet" id="P48728"/>
<dbReference type="PhosphoSitePlus" id="P48728"/>
<dbReference type="BioMuta" id="AMT"/>
<dbReference type="DMDM" id="1346122"/>
<dbReference type="jPOST" id="P48728"/>
<dbReference type="MassIVE" id="P48728"/>
<dbReference type="PaxDb" id="9606-ENSP00000273588"/>
<dbReference type="PeptideAtlas" id="P48728"/>
<dbReference type="ProteomicsDB" id="19216"/>
<dbReference type="ProteomicsDB" id="55925">
    <molecule id="P48728-1"/>
</dbReference>
<dbReference type="ProteomicsDB" id="55926">
    <molecule id="P48728-2"/>
</dbReference>
<dbReference type="ProteomicsDB" id="55927">
    <molecule id="P48728-3"/>
</dbReference>
<dbReference type="Antibodypedia" id="1586">
    <property type="antibodies" value="185 antibodies from 27 providers"/>
</dbReference>
<dbReference type="DNASU" id="275"/>
<dbReference type="Ensembl" id="ENST00000273588.9">
    <molecule id="P48728-1"/>
    <property type="protein sequence ID" value="ENSP00000273588.3"/>
    <property type="gene ID" value="ENSG00000145020.16"/>
</dbReference>
<dbReference type="Ensembl" id="ENST00000395338.7">
    <molecule id="P48728-4"/>
    <property type="protein sequence ID" value="ENSP00000378747.2"/>
    <property type="gene ID" value="ENSG00000145020.16"/>
</dbReference>
<dbReference type="Ensembl" id="ENST00000458307.6">
    <molecule id="P48728-3"/>
    <property type="protein sequence ID" value="ENSP00000415619.2"/>
    <property type="gene ID" value="ENSG00000145020.16"/>
</dbReference>
<dbReference type="Ensembl" id="ENST00000636522.1">
    <molecule id="P48728-2"/>
    <property type="protein sequence ID" value="ENSP00000489758.1"/>
    <property type="gene ID" value="ENSG00000145020.16"/>
</dbReference>
<dbReference type="GeneID" id="275"/>
<dbReference type="KEGG" id="hsa:275"/>
<dbReference type="MANE-Select" id="ENST00000273588.9">
    <property type="protein sequence ID" value="ENSP00000273588.3"/>
    <property type="RefSeq nucleotide sequence ID" value="NM_000481.4"/>
    <property type="RefSeq protein sequence ID" value="NP_000472.2"/>
</dbReference>
<dbReference type="UCSC" id="uc003cww.4">
    <molecule id="P48728-1"/>
    <property type="organism name" value="human"/>
</dbReference>
<dbReference type="AGR" id="HGNC:473"/>
<dbReference type="CTD" id="275"/>
<dbReference type="DisGeNET" id="275"/>
<dbReference type="GeneCards" id="AMT"/>
<dbReference type="GeneReviews" id="AMT"/>
<dbReference type="HGNC" id="HGNC:473">
    <property type="gene designation" value="AMT"/>
</dbReference>
<dbReference type="HPA" id="ENSG00000145020">
    <property type="expression patterns" value="Tissue enhanced (liver)"/>
</dbReference>
<dbReference type="MalaCards" id="AMT"/>
<dbReference type="MIM" id="238310">
    <property type="type" value="gene"/>
</dbReference>
<dbReference type="MIM" id="620398">
    <property type="type" value="phenotype"/>
</dbReference>
<dbReference type="neXtProt" id="NX_P48728"/>
<dbReference type="OpenTargets" id="ENSG00000145020"/>
<dbReference type="Orphanet" id="289863">
    <property type="disease" value="Atypical glycine encephalopathy"/>
</dbReference>
<dbReference type="Orphanet" id="289860">
    <property type="disease" value="Infantile glycine encephalopathy"/>
</dbReference>
<dbReference type="Orphanet" id="289857">
    <property type="disease" value="Neonatal glycine encephalopathy"/>
</dbReference>
<dbReference type="PharmGKB" id="PA24780"/>
<dbReference type="VEuPathDB" id="HostDB:ENSG00000145020"/>
<dbReference type="eggNOG" id="KOG2770">
    <property type="taxonomic scope" value="Eukaryota"/>
</dbReference>
<dbReference type="GeneTree" id="ENSGT00940000157524"/>
<dbReference type="HOGENOM" id="CLU_007884_10_0_1"/>
<dbReference type="InParanoid" id="P48728"/>
<dbReference type="OMA" id="MPVQYPA"/>
<dbReference type="OrthoDB" id="10263536at2759"/>
<dbReference type="PAN-GO" id="P48728">
    <property type="GO annotations" value="3 GO annotations based on evolutionary models"/>
</dbReference>
<dbReference type="PhylomeDB" id="P48728"/>
<dbReference type="TreeFam" id="TF313026"/>
<dbReference type="BioCyc" id="MetaCyc:HS07223-MONOMER"/>
<dbReference type="BRENDA" id="1.4.1.27">
    <property type="organism ID" value="2681"/>
</dbReference>
<dbReference type="BRENDA" id="2.1.2.10">
    <property type="organism ID" value="2681"/>
</dbReference>
<dbReference type="PathwayCommons" id="P48728"/>
<dbReference type="Reactome" id="R-HSA-6783984">
    <property type="pathway name" value="Glycine degradation"/>
</dbReference>
<dbReference type="SABIO-RK" id="P48728"/>
<dbReference type="SignaLink" id="P48728"/>
<dbReference type="SIGNOR" id="P48728"/>
<dbReference type="BioGRID-ORCS" id="275">
    <property type="hits" value="11 hits in 1159 CRISPR screens"/>
</dbReference>
<dbReference type="ChiTaRS" id="AMT">
    <property type="organism name" value="human"/>
</dbReference>
<dbReference type="EvolutionaryTrace" id="P48728"/>
<dbReference type="GenomeRNAi" id="275"/>
<dbReference type="Pharos" id="P48728">
    <property type="development level" value="Tbio"/>
</dbReference>
<dbReference type="PRO" id="PR:P48728"/>
<dbReference type="Proteomes" id="UP000005640">
    <property type="component" value="Chromosome 3"/>
</dbReference>
<dbReference type="RNAct" id="P48728">
    <property type="molecule type" value="protein"/>
</dbReference>
<dbReference type="Bgee" id="ENSG00000145020">
    <property type="expression patterns" value="Expressed in right lobe of liver and 98 other cell types or tissues"/>
</dbReference>
<dbReference type="ExpressionAtlas" id="P48728">
    <property type="expression patterns" value="baseline and differential"/>
</dbReference>
<dbReference type="GO" id="GO:0005960">
    <property type="term" value="C:glycine cleavage complex"/>
    <property type="evidence" value="ECO:0007669"/>
    <property type="project" value="InterPro"/>
</dbReference>
<dbReference type="GO" id="GO:0005759">
    <property type="term" value="C:mitochondrial matrix"/>
    <property type="evidence" value="ECO:0000304"/>
    <property type="project" value="Reactome"/>
</dbReference>
<dbReference type="GO" id="GO:0005739">
    <property type="term" value="C:mitochondrion"/>
    <property type="evidence" value="ECO:0000314"/>
    <property type="project" value="HPA"/>
</dbReference>
<dbReference type="GO" id="GO:0005654">
    <property type="term" value="C:nucleoplasm"/>
    <property type="evidence" value="ECO:0000314"/>
    <property type="project" value="HPA"/>
</dbReference>
<dbReference type="GO" id="GO:0004047">
    <property type="term" value="F:aminomethyltransferase activity"/>
    <property type="evidence" value="ECO:0000315"/>
    <property type="project" value="UniProtKB"/>
</dbReference>
<dbReference type="GO" id="GO:0008483">
    <property type="term" value="F:transaminase activity"/>
    <property type="evidence" value="ECO:0007669"/>
    <property type="project" value="UniProtKB-KW"/>
</dbReference>
<dbReference type="GO" id="GO:0006546">
    <property type="term" value="P:glycine catabolic process"/>
    <property type="evidence" value="ECO:0000304"/>
    <property type="project" value="Reactome"/>
</dbReference>
<dbReference type="GO" id="GO:0019464">
    <property type="term" value="P:glycine decarboxylation via glycine cleavage system"/>
    <property type="evidence" value="ECO:0000315"/>
    <property type="project" value="UniProtKB"/>
</dbReference>
<dbReference type="FunFam" id="2.40.30.110:FF:000002">
    <property type="entry name" value="Aminomethyltransferase"/>
    <property type="match status" value="1"/>
</dbReference>
<dbReference type="FunFam" id="3.30.1360.120:FF:000014">
    <property type="entry name" value="Aminomethyltransferase"/>
    <property type="match status" value="1"/>
</dbReference>
<dbReference type="FunFam" id="3.30.1360.120:FF:000016">
    <property type="entry name" value="Aminomethyltransferase"/>
    <property type="match status" value="1"/>
</dbReference>
<dbReference type="FunFam" id="3.30.70.1400:FF:000001">
    <property type="entry name" value="Aminomethyltransferase"/>
    <property type="match status" value="1"/>
</dbReference>
<dbReference type="FunFam" id="4.10.1250.10:FF:000002">
    <property type="entry name" value="Aminomethyltransferase"/>
    <property type="match status" value="1"/>
</dbReference>
<dbReference type="FunFam" id="3.30.1360.120:FF:000018">
    <property type="entry name" value="Aminomethyltransferase, mitochondrial"/>
    <property type="match status" value="1"/>
</dbReference>
<dbReference type="Gene3D" id="2.40.30.110">
    <property type="entry name" value="Aminomethyltransferase beta-barrel domains"/>
    <property type="match status" value="1"/>
</dbReference>
<dbReference type="Gene3D" id="3.30.70.1400">
    <property type="entry name" value="Aminomethyltransferase beta-barrel domains"/>
    <property type="match status" value="1"/>
</dbReference>
<dbReference type="Gene3D" id="4.10.1250.10">
    <property type="entry name" value="Aminomethyltransferase fragment"/>
    <property type="match status" value="1"/>
</dbReference>
<dbReference type="Gene3D" id="3.30.1360.120">
    <property type="entry name" value="Probable tRNA modification gtpase trme, domain 1"/>
    <property type="match status" value="1"/>
</dbReference>
<dbReference type="InterPro" id="IPR006223">
    <property type="entry name" value="GCS_T"/>
</dbReference>
<dbReference type="InterPro" id="IPR013977">
    <property type="entry name" value="GCST_C"/>
</dbReference>
<dbReference type="InterPro" id="IPR006222">
    <property type="entry name" value="GCV_T_N"/>
</dbReference>
<dbReference type="InterPro" id="IPR028896">
    <property type="entry name" value="GcvT/YgfZ/DmdA"/>
</dbReference>
<dbReference type="InterPro" id="IPR029043">
    <property type="entry name" value="GcvT/YgfZ_C"/>
</dbReference>
<dbReference type="InterPro" id="IPR027266">
    <property type="entry name" value="TrmE/GcvT_dom1"/>
</dbReference>
<dbReference type="NCBIfam" id="TIGR00528">
    <property type="entry name" value="gcvT"/>
    <property type="match status" value="1"/>
</dbReference>
<dbReference type="NCBIfam" id="NF001567">
    <property type="entry name" value="PRK00389.1"/>
    <property type="match status" value="1"/>
</dbReference>
<dbReference type="PANTHER" id="PTHR43757">
    <property type="entry name" value="AMINOMETHYLTRANSFERASE"/>
    <property type="match status" value="1"/>
</dbReference>
<dbReference type="PANTHER" id="PTHR43757:SF16">
    <property type="entry name" value="AMINOMETHYLTRANSFERASE, MITOCHONDRIAL"/>
    <property type="match status" value="1"/>
</dbReference>
<dbReference type="Pfam" id="PF01571">
    <property type="entry name" value="GCV_T"/>
    <property type="match status" value="1"/>
</dbReference>
<dbReference type="Pfam" id="PF08669">
    <property type="entry name" value="GCV_T_C"/>
    <property type="match status" value="1"/>
</dbReference>
<dbReference type="PIRSF" id="PIRSF006487">
    <property type="entry name" value="GcvT"/>
    <property type="match status" value="1"/>
</dbReference>
<dbReference type="SUPFAM" id="SSF101790">
    <property type="entry name" value="Aminomethyltransferase beta-barrel domain"/>
    <property type="match status" value="1"/>
</dbReference>
<dbReference type="SUPFAM" id="SSF103025">
    <property type="entry name" value="Folate-binding domain"/>
    <property type="match status" value="1"/>
</dbReference>
<sequence>MQRAVSVVARLGFRLQAFPPALCRPLSCAQEVLRRTPLYDFHLAHGGKMVAFAGWSLPVQYRDSHTDSHLHTRQHCSLFDVSHMLQTKILGSDRVKLMESLVVGDIAELRPNQGTLSLFTNEAGGILDDLIVTNTSEGHLYVVSNAGCWEKDLALMQDKVRELQNQGRDVGLEVLDNALLALQGPTAAQVLQAGVADDLRKLPFMTSAVMEVFGVSGCRVTRCGYTGEDGVEISVPVAGAVHLATAILKNPEVKLAGLAARDSLRLEAGLCLYGNDIDEHTTPVEGSLSWTLGKRRRAAMDFPGAKVIVPQLKGRVQRRRVGLMCEGAPMRAHSPILNMEGTKIGTVTSGCPSPSLKKNVAMGYVPCEYSRPGTMLLVEVRRKQQMAVVSKMPFVPTNYYTLK</sequence>